<gene>
    <name type="primary">rps15</name>
</gene>
<name>RR15_POPAL</name>
<evidence type="ECO:0000250" key="1"/>
<evidence type="ECO:0000305" key="2"/>
<feature type="chain" id="PRO_0000255555" description="Small ribosomal subunit protein uS15c">
    <location>
        <begin position="1"/>
        <end position="90"/>
    </location>
</feature>
<geneLocation type="chloroplast"/>
<keyword id="KW-0150">Chloroplast</keyword>
<keyword id="KW-0934">Plastid</keyword>
<keyword id="KW-0687">Ribonucleoprotein</keyword>
<keyword id="KW-0689">Ribosomal protein</keyword>
<organism>
    <name type="scientific">Populus alba</name>
    <name type="common">White poplar</name>
    <dbReference type="NCBI Taxonomy" id="43335"/>
    <lineage>
        <taxon>Eukaryota</taxon>
        <taxon>Viridiplantae</taxon>
        <taxon>Streptophyta</taxon>
        <taxon>Embryophyta</taxon>
        <taxon>Tracheophyta</taxon>
        <taxon>Spermatophyta</taxon>
        <taxon>Magnoliopsida</taxon>
        <taxon>eudicotyledons</taxon>
        <taxon>Gunneridae</taxon>
        <taxon>Pentapetalae</taxon>
        <taxon>rosids</taxon>
        <taxon>fabids</taxon>
        <taxon>Malpighiales</taxon>
        <taxon>Salicaceae</taxon>
        <taxon>Saliceae</taxon>
        <taxon>Populus</taxon>
    </lineage>
</organism>
<comment type="subunit">
    <text evidence="1">Part of the 30S ribosomal subunit.</text>
</comment>
<comment type="subcellular location">
    <subcellularLocation>
        <location>Plastid</location>
        <location>Chloroplast</location>
    </subcellularLocation>
</comment>
<comment type="similarity">
    <text evidence="2">Belongs to the universal ribosomal protein uS15 family.</text>
</comment>
<proteinExistence type="inferred from homology"/>
<sequence>MVKSSFISIISQEDKKENKGSVEFQIVSFTNKIRRLTSHLELHRKDYLSQRGLRKILGKRQRLLSYLAKKNGVRYKELISQLNIRESKTR</sequence>
<reference key="1">
    <citation type="submission" date="2005-03" db="EMBL/GenBank/DDBJ databases">
        <title>Complete structure of the chloroplast genome of Populus alba.</title>
        <authorList>
            <person name="Okumura S."/>
            <person name="Yamashita A."/>
            <person name="Kanamoto H."/>
            <person name="Hattori M."/>
            <person name="Takase H."/>
            <person name="Tomizawa K."/>
        </authorList>
    </citation>
    <scope>NUCLEOTIDE SEQUENCE [LARGE SCALE GENOMIC DNA]</scope>
</reference>
<protein>
    <recommendedName>
        <fullName evidence="2">Small ribosomal subunit protein uS15c</fullName>
    </recommendedName>
    <alternativeName>
        <fullName>30S ribosomal protein S15, chloroplastic</fullName>
    </alternativeName>
</protein>
<accession>Q14FA1</accession>
<dbReference type="EMBL" id="AP008956">
    <property type="protein sequence ID" value="BAE97261.1"/>
    <property type="molecule type" value="Genomic_DNA"/>
</dbReference>
<dbReference type="RefSeq" id="YP_665613.1">
    <property type="nucleotide sequence ID" value="NC_008235.1"/>
</dbReference>
<dbReference type="SMR" id="Q14FA1"/>
<dbReference type="GeneID" id="4178260"/>
<dbReference type="KEGG" id="palz:4178260"/>
<dbReference type="OrthoDB" id="18812at3646"/>
<dbReference type="GO" id="GO:0009507">
    <property type="term" value="C:chloroplast"/>
    <property type="evidence" value="ECO:0007669"/>
    <property type="project" value="UniProtKB-SubCell"/>
</dbReference>
<dbReference type="GO" id="GO:1990904">
    <property type="term" value="C:ribonucleoprotein complex"/>
    <property type="evidence" value="ECO:0007669"/>
    <property type="project" value="UniProtKB-KW"/>
</dbReference>
<dbReference type="GO" id="GO:0005840">
    <property type="term" value="C:ribosome"/>
    <property type="evidence" value="ECO:0007669"/>
    <property type="project" value="UniProtKB-KW"/>
</dbReference>
<dbReference type="GO" id="GO:0003735">
    <property type="term" value="F:structural constituent of ribosome"/>
    <property type="evidence" value="ECO:0007669"/>
    <property type="project" value="InterPro"/>
</dbReference>
<dbReference type="GO" id="GO:0006412">
    <property type="term" value="P:translation"/>
    <property type="evidence" value="ECO:0007669"/>
    <property type="project" value="UniProtKB-UniRule"/>
</dbReference>
<dbReference type="CDD" id="cd00353">
    <property type="entry name" value="Ribosomal_S15p_S13e"/>
    <property type="match status" value="1"/>
</dbReference>
<dbReference type="Gene3D" id="1.10.287.10">
    <property type="entry name" value="S15/NS1, RNA-binding"/>
    <property type="match status" value="1"/>
</dbReference>
<dbReference type="HAMAP" id="MF_01343_B">
    <property type="entry name" value="Ribosomal_uS15_B"/>
    <property type="match status" value="1"/>
</dbReference>
<dbReference type="InterPro" id="IPR000589">
    <property type="entry name" value="Ribosomal_uS15"/>
</dbReference>
<dbReference type="InterPro" id="IPR005290">
    <property type="entry name" value="Ribosomal_uS15_bac-type"/>
</dbReference>
<dbReference type="InterPro" id="IPR009068">
    <property type="entry name" value="uS15_NS1_RNA-bd_sf"/>
</dbReference>
<dbReference type="NCBIfam" id="TIGR00952">
    <property type="entry name" value="S15_bact"/>
    <property type="match status" value="1"/>
</dbReference>
<dbReference type="PANTHER" id="PTHR23321">
    <property type="entry name" value="RIBOSOMAL PROTEIN S15, BACTERIAL AND ORGANELLAR"/>
    <property type="match status" value="1"/>
</dbReference>
<dbReference type="PANTHER" id="PTHR23321:SF26">
    <property type="entry name" value="SMALL RIBOSOMAL SUBUNIT PROTEIN US15M"/>
    <property type="match status" value="1"/>
</dbReference>
<dbReference type="Pfam" id="PF00312">
    <property type="entry name" value="Ribosomal_S15"/>
    <property type="match status" value="1"/>
</dbReference>
<dbReference type="SMART" id="SM01387">
    <property type="entry name" value="Ribosomal_S15"/>
    <property type="match status" value="1"/>
</dbReference>
<dbReference type="SUPFAM" id="SSF47060">
    <property type="entry name" value="S15/NS1 RNA-binding domain"/>
    <property type="match status" value="1"/>
</dbReference>
<dbReference type="PROSITE" id="PS00362">
    <property type="entry name" value="RIBOSOMAL_S15"/>
    <property type="match status" value="1"/>
</dbReference>